<sequence length="549" mass="60193">MFAPSLAAFRAMALPIPRLAPVMKSVQPASFPVLGSMAARLSTARGGRGLRAGRRPPGGPKGAAAAEEMAVPIGAALQDPNVGMAPVNDDLEIIEEVMKEDGFQPDPPPPGSPHDPPKLIPRGLGVPVGRRDPPRDPPRLIITEQPKKTGMRFRYECEGRSAGSILGESSTEASKTLPAIELLNCQAIPEVQVTACLVWKDWPHRVHPHGLVGKDCSNGLCQVRLQPHANPRHSFSNLGIQCVKKKEIEAAIEKKLQLGIDPFKAGSLKNHQEVDMNVVRICFQASYRDGSGRTRQLSPVLSEPIFDKKSTNTSELRICRMNKESGPCTGGEELYLLCDKVQKEDIAVVFRKEPWEARADFSQADVHRQGAIVLRTPPYRCVQLSEPVQVEVFLQRLTDRARSRGCPYTYLPRERDAYGVKVKRKRGMPDLLEELSGADPYGIEAKRRKPPPGFMDHFAPLPAADEAFALLADPLDPLSHLPPPSTPQILWGRSYFRTPPPTETPTPPTASWGPICSQGTSEGGGGRTSPRYRPPPPLKWGSQWAPPHQ</sequence>
<comment type="function">
    <text evidence="1">NF-kappa-B is a pleiotropic transcription factor which is present in almost all cell types and is involved in many biological processed such as inflammation, immunity, differentiation, cell growth, tumorigenesis and apoptosis. NF-kappa-B is a homo- or heterodimeric complex formed by the Rel-like domain-containing proteins RELA/p65, RELB, NFKB1/p105, NFKB1/p50, REL and NFKB2/p52. The dimers bind at kappa-B sites in the DNA of their target genes and the individual dimers have distinct preferences for different kappa-B sites that they can bind with distinguishable affinity and specificity. Different dimer combinations act as transcriptional activators or repressors, respectively. NF-kappa-B is controlled by various mechanisms of post-translational modification and subcellular compartmentalization as well as by interactions with other cofactors or corepressors. NF-kappa-B complexes are held in the cytoplasm in an inactive state complexed with members of the NF-kappa-B inhibitor (I-kappa-B) family. In a conventional activation pathway, I-kappa-B is phosphorylated by I-kappa-B kinases (IKKs) in response to different activators, subsequently degraded thus liberating the active NF-kappa-B complex which translocates to the nucleus. NF-kappa-B heterodimeric RelB-p50 and RelB-p52 complexes are transcriptional activators. Stimulates promoter activity in the presence of p49- and p50-NF-kappa-B. Neither associates with DNA nor with p65-NF-kappa-B. May play a role in the regulation of the circadian clock (By similarity).</text>
</comment>
<comment type="subunit">
    <text evidence="4">Component of the NF-kappa-B RelB-p50 complex. Component of the NF-kappa-B RelB-p52 complex.</text>
</comment>
<comment type="subcellular location">
    <subcellularLocation>
        <location>Nucleus</location>
    </subcellularLocation>
</comment>
<name>RELB_CHICK</name>
<keyword id="KW-0010">Activator</keyword>
<keyword id="KW-0090">Biological rhythms</keyword>
<keyword id="KW-0539">Nucleus</keyword>
<keyword id="KW-1185">Reference proteome</keyword>
<keyword id="KW-0804">Transcription</keyword>
<keyword id="KW-0805">Transcription regulation</keyword>
<proteinExistence type="evidence at protein level"/>
<protein>
    <recommendedName>
        <fullName>Transcription factor RelB homolog</fullName>
    </recommendedName>
</protein>
<accession>P51509</accession>
<accession>Q90721</accession>
<accession>Q9PWF4</accession>
<reference key="1">
    <citation type="journal article" date="2001" name="Mol. Cell Biol. Res. Commun.">
        <title>The chicken RelB transcription factor has transactivation sequences and a tissue-specific expression pattern that are distinct from mammalian RelB.</title>
        <authorList>
            <person name="Piffat K.A."/>
            <person name="Hrdlickova R."/>
            <person name="Nehyba J."/>
            <person name="Ikeda T."/>
            <person name="Liss A."/>
            <person name="Huang S."/>
            <person name="Sif S."/>
            <person name="Gilmore T.D."/>
            <person name="Bose H.R. Jr."/>
        </authorList>
    </citation>
    <scope>NUCLEOTIDE SEQUENCE [MRNA]</scope>
    <scope>IDENTIFICATION IN THE NF-KAPPA-B RELB-P50 COMPLEX</scope>
    <scope>IDENTIFICATION IN THE NF-KAPPA-B RELB-P52 COMPLEX</scope>
    <source>
        <tissue>Spleen</tissue>
    </source>
</reference>
<reference key="2">
    <citation type="submission" date="1996-01" db="EMBL/GenBank/DDBJ databases">
        <authorList>
            <person name="Ikeda T."/>
        </authorList>
    </citation>
    <scope>NUCLEOTIDE SEQUENCE [MRNA] OF 151-424</scope>
    <source>
        <tissue>Spleen</tissue>
    </source>
</reference>
<reference key="3">
    <citation type="submission" date="1996-03" db="EMBL/GenBank/DDBJ databases">
        <authorList>
            <person name="Gilmore T.D."/>
            <person name="Piffat K.A."/>
            <person name="Huang S."/>
            <person name="Sif S."/>
        </authorList>
    </citation>
    <scope>NUCLEOTIDE SEQUENCE [MRNA] OF 150-479</scope>
</reference>
<organism>
    <name type="scientific">Gallus gallus</name>
    <name type="common">Chicken</name>
    <dbReference type="NCBI Taxonomy" id="9031"/>
    <lineage>
        <taxon>Eukaryota</taxon>
        <taxon>Metazoa</taxon>
        <taxon>Chordata</taxon>
        <taxon>Craniata</taxon>
        <taxon>Vertebrata</taxon>
        <taxon>Euteleostomi</taxon>
        <taxon>Archelosauria</taxon>
        <taxon>Archosauria</taxon>
        <taxon>Dinosauria</taxon>
        <taxon>Saurischia</taxon>
        <taxon>Theropoda</taxon>
        <taxon>Coelurosauria</taxon>
        <taxon>Aves</taxon>
        <taxon>Neognathae</taxon>
        <taxon>Galloanserae</taxon>
        <taxon>Galliformes</taxon>
        <taxon>Phasianidae</taxon>
        <taxon>Phasianinae</taxon>
        <taxon>Gallus</taxon>
    </lineage>
</organism>
<dbReference type="EMBL" id="AF029260">
    <property type="protein sequence ID" value="AAD41539.1"/>
    <property type="molecule type" value="mRNA"/>
</dbReference>
<dbReference type="EMBL" id="D13794">
    <property type="protein sequence ID" value="BAA02947.1"/>
    <property type="molecule type" value="mRNA"/>
</dbReference>
<dbReference type="EMBL" id="U51737">
    <property type="protein sequence ID" value="AAA96827.1"/>
    <property type="molecule type" value="mRNA"/>
</dbReference>
<dbReference type="SMR" id="P51509"/>
<dbReference type="FunCoup" id="P51509">
    <property type="interactions" value="9"/>
</dbReference>
<dbReference type="GlyGen" id="P51509">
    <property type="glycosylation" value="1 site"/>
</dbReference>
<dbReference type="VEuPathDB" id="HostDB:geneid_396500"/>
<dbReference type="InParanoid" id="P51509"/>
<dbReference type="PhylomeDB" id="P51509"/>
<dbReference type="PRO" id="PR:P51509"/>
<dbReference type="Proteomes" id="UP000000539">
    <property type="component" value="Unassembled WGS sequence"/>
</dbReference>
<dbReference type="GO" id="GO:0005737">
    <property type="term" value="C:cytoplasm"/>
    <property type="evidence" value="ECO:0000318"/>
    <property type="project" value="GO_Central"/>
</dbReference>
<dbReference type="GO" id="GO:0005634">
    <property type="term" value="C:nucleus"/>
    <property type="evidence" value="ECO:0000318"/>
    <property type="project" value="GO_Central"/>
</dbReference>
<dbReference type="GO" id="GO:0000981">
    <property type="term" value="F:DNA-binding transcription factor activity, RNA polymerase II-specific"/>
    <property type="evidence" value="ECO:0000318"/>
    <property type="project" value="GO_Central"/>
</dbReference>
<dbReference type="GO" id="GO:0000978">
    <property type="term" value="F:RNA polymerase II cis-regulatory region sequence-specific DNA binding"/>
    <property type="evidence" value="ECO:0000318"/>
    <property type="project" value="GO_Central"/>
</dbReference>
<dbReference type="GO" id="GO:0007249">
    <property type="term" value="P:canonical NF-kappaB signal transduction"/>
    <property type="evidence" value="ECO:0000318"/>
    <property type="project" value="GO_Central"/>
</dbReference>
<dbReference type="GO" id="GO:0006954">
    <property type="term" value="P:inflammatory response"/>
    <property type="evidence" value="ECO:0000318"/>
    <property type="project" value="GO_Central"/>
</dbReference>
<dbReference type="GO" id="GO:0045087">
    <property type="term" value="P:innate immune response"/>
    <property type="evidence" value="ECO:0000318"/>
    <property type="project" value="GO_Central"/>
</dbReference>
<dbReference type="GO" id="GO:0038061">
    <property type="term" value="P:non-canonical NF-kappaB signal transduction"/>
    <property type="evidence" value="ECO:0000318"/>
    <property type="project" value="GO_Central"/>
</dbReference>
<dbReference type="GO" id="GO:0045944">
    <property type="term" value="P:positive regulation of transcription by RNA polymerase II"/>
    <property type="evidence" value="ECO:0000318"/>
    <property type="project" value="GO_Central"/>
</dbReference>
<dbReference type="GO" id="GO:0034097">
    <property type="term" value="P:response to cytokine"/>
    <property type="evidence" value="ECO:0000318"/>
    <property type="project" value="GO_Central"/>
</dbReference>
<dbReference type="GO" id="GO:0048511">
    <property type="term" value="P:rhythmic process"/>
    <property type="evidence" value="ECO:0007669"/>
    <property type="project" value="UniProtKB-KW"/>
</dbReference>
<dbReference type="CDD" id="cd01177">
    <property type="entry name" value="IPT_NFkappaB"/>
    <property type="match status" value="1"/>
</dbReference>
<dbReference type="CDD" id="cd07886">
    <property type="entry name" value="RHD-n_RelB"/>
    <property type="match status" value="1"/>
</dbReference>
<dbReference type="FunFam" id="2.60.40.10:FF:000046">
    <property type="entry name" value="Nuclear factor NF-kappa-B p105 subunit"/>
    <property type="match status" value="1"/>
</dbReference>
<dbReference type="FunFam" id="2.60.40.340:FF:000005">
    <property type="entry name" value="RELB proto-oncogene, NF-kB subunit"/>
    <property type="match status" value="1"/>
</dbReference>
<dbReference type="Gene3D" id="2.60.40.10">
    <property type="entry name" value="Immunoglobulins"/>
    <property type="match status" value="1"/>
</dbReference>
<dbReference type="Gene3D" id="2.60.40.340">
    <property type="entry name" value="Rel homology domain (RHD), DNA-binding domain"/>
    <property type="match status" value="1"/>
</dbReference>
<dbReference type="InterPro" id="IPR013783">
    <property type="entry name" value="Ig-like_fold"/>
</dbReference>
<dbReference type="InterPro" id="IPR014756">
    <property type="entry name" value="Ig_E-set"/>
</dbReference>
<dbReference type="InterPro" id="IPR002909">
    <property type="entry name" value="IPT_dom"/>
</dbReference>
<dbReference type="InterPro" id="IPR033926">
    <property type="entry name" value="IPT_NFkappaB"/>
</dbReference>
<dbReference type="InterPro" id="IPR000451">
    <property type="entry name" value="NFkB/Dor"/>
</dbReference>
<dbReference type="InterPro" id="IPR008967">
    <property type="entry name" value="p53-like_TF_DNA-bd_sf"/>
</dbReference>
<dbReference type="InterPro" id="IPR030496">
    <property type="entry name" value="RelB_RHD_N"/>
</dbReference>
<dbReference type="InterPro" id="IPR032400">
    <property type="entry name" value="RelB_transact"/>
</dbReference>
<dbReference type="InterPro" id="IPR030492">
    <property type="entry name" value="RHD_CS"/>
</dbReference>
<dbReference type="InterPro" id="IPR032397">
    <property type="entry name" value="RHD_dimer"/>
</dbReference>
<dbReference type="InterPro" id="IPR011539">
    <property type="entry name" value="RHD_DNA_bind_dom"/>
</dbReference>
<dbReference type="InterPro" id="IPR037059">
    <property type="entry name" value="RHD_DNA_bind_dom_sf"/>
</dbReference>
<dbReference type="PANTHER" id="PTHR24169">
    <property type="entry name" value="NUCLEAR FACTOR NF-KAPPA-B PROTEIN"/>
    <property type="match status" value="1"/>
</dbReference>
<dbReference type="PANTHER" id="PTHR24169:SF18">
    <property type="entry name" value="TRANSCRIPTION FACTOR RELB"/>
    <property type="match status" value="1"/>
</dbReference>
<dbReference type="Pfam" id="PF16181">
    <property type="entry name" value="RelB_transactiv"/>
    <property type="match status" value="1"/>
</dbReference>
<dbReference type="Pfam" id="PF16179">
    <property type="entry name" value="RHD_dimer"/>
    <property type="match status" value="1"/>
</dbReference>
<dbReference type="Pfam" id="PF00554">
    <property type="entry name" value="RHD_DNA_bind"/>
    <property type="match status" value="1"/>
</dbReference>
<dbReference type="PRINTS" id="PR00057">
    <property type="entry name" value="NFKBTNSCPFCT"/>
</dbReference>
<dbReference type="SMART" id="SM00429">
    <property type="entry name" value="IPT"/>
    <property type="match status" value="1"/>
</dbReference>
<dbReference type="SUPFAM" id="SSF81296">
    <property type="entry name" value="E set domains"/>
    <property type="match status" value="1"/>
</dbReference>
<dbReference type="SUPFAM" id="SSF49417">
    <property type="entry name" value="p53-like transcription factors"/>
    <property type="match status" value="1"/>
</dbReference>
<dbReference type="PROSITE" id="PS01204">
    <property type="entry name" value="REL_1"/>
    <property type="match status" value="1"/>
</dbReference>
<dbReference type="PROSITE" id="PS50254">
    <property type="entry name" value="REL_2"/>
    <property type="match status" value="1"/>
</dbReference>
<feature type="chain" id="PRO_0000205175" description="Transcription factor RelB homolog">
    <location>
        <begin position="1"/>
        <end position="549"/>
    </location>
</feature>
<feature type="domain" description="RHD" evidence="2">
    <location>
        <begin position="135"/>
        <end position="412"/>
    </location>
</feature>
<feature type="region of interest" description="Disordered" evidence="3">
    <location>
        <begin position="100"/>
        <end position="141"/>
    </location>
</feature>
<feature type="region of interest" description="Disordered" evidence="3">
    <location>
        <begin position="497"/>
        <end position="549"/>
    </location>
</feature>
<feature type="compositionally biased region" description="Pro residues" evidence="3">
    <location>
        <begin position="105"/>
        <end position="114"/>
    </location>
</feature>
<feature type="compositionally biased region" description="Basic and acidic residues" evidence="3">
    <location>
        <begin position="129"/>
        <end position="138"/>
    </location>
</feature>
<feature type="compositionally biased region" description="Pro residues" evidence="3">
    <location>
        <begin position="498"/>
        <end position="508"/>
    </location>
</feature>
<feature type="sequence conflict" description="In Ref. 1; AAD41539." evidence="5" ref="1">
    <original>G</original>
    <variation>A</variation>
    <location>
        <position position="266"/>
    </location>
</feature>
<feature type="sequence conflict" description="In Ref. 2; BAA02947." evidence="5" ref="2">
    <original>A</original>
    <variation>G</variation>
    <location>
        <position position="364"/>
    </location>
</feature>
<feature type="sequence conflict" description="In Ref. 2; BAA02947." evidence="5" ref="2">
    <original>G</original>
    <variation>E</variation>
    <location>
        <position position="370"/>
    </location>
</feature>
<feature type="sequence conflict" description="In Ref. 3; AAA96827." evidence="5" ref="3">
    <original>R</original>
    <variation>A</variation>
    <location>
        <position position="380"/>
    </location>
</feature>
<feature type="sequence conflict" description="In Ref. 3; AAA96827." evidence="5" ref="3">
    <original>S</original>
    <variation>F</variation>
    <location>
        <position position="479"/>
    </location>
</feature>
<evidence type="ECO:0000250" key="1"/>
<evidence type="ECO:0000255" key="2">
    <source>
        <dbReference type="PROSITE-ProRule" id="PRU00265"/>
    </source>
</evidence>
<evidence type="ECO:0000256" key="3">
    <source>
        <dbReference type="SAM" id="MobiDB-lite"/>
    </source>
</evidence>
<evidence type="ECO:0000269" key="4">
    <source>
    </source>
</evidence>
<evidence type="ECO:0000305" key="5"/>
<gene>
    <name type="primary">RELB</name>
</gene>